<keyword id="KW-0963">Cytoplasm</keyword>
<keyword id="KW-0342">GTP-binding</keyword>
<keyword id="KW-0547">Nucleotide-binding</keyword>
<keyword id="KW-0648">Protein biosynthesis</keyword>
<protein>
    <recommendedName>
        <fullName evidence="1">Peptide chain release factor 3</fullName>
        <shortName evidence="1">RF-3</shortName>
    </recommendedName>
</protein>
<name>RF3_HAEIE</name>
<comment type="function">
    <text evidence="1">Increases the formation of ribosomal termination complexes and stimulates activities of RF-1 and RF-2. It binds guanine nucleotides and has strong preference for UGA stop codons. It may interact directly with the ribosome. The stimulation of RF-1 and RF-2 is significantly reduced by GTP and GDP, but not by GMP.</text>
</comment>
<comment type="subcellular location">
    <subcellularLocation>
        <location evidence="1">Cytoplasm</location>
    </subcellularLocation>
</comment>
<comment type="similarity">
    <text evidence="1">Belongs to the TRAFAC class translation factor GTPase superfamily. Classic translation factor GTPase family. PrfC subfamily.</text>
</comment>
<sequence>MSYPLEEVNKRRTFAIISHPDAGKTTITEKVLLYGNAIQTAGSVKGKGSAAHAKSDWMEMEKQRGISITTSVMQFPYNNCLVNLLDTPGHEDFSEDTYRTLTAVDSCLMVIDSAKGVEERTIKLMEVTRLRDTPIITFMNKLDRDIRDPMELLDEVENVLKIRCAPITWPIGCGKLFKGVYHLAKNETYLYQSGQGSTIQAVRVVKGLNNPELDVAVGDDLAQQLRDELELVQGASNEFEQDAFIKGELTPVFFGTALGNFGVDHFLDGLTQWAPKPQSRQADTRTVESAEEKFSGFVFKIQANMDPKHRDRVAFMRVVSGKYEKGMKLKHVRIGKDVVISDALTFMAGDRAHAEEAYAGDIIGLHNHGTIQIGDTFTQGETLKFTGIPNFAPELFRRIRLKDPLKQKQLLKGLVQLSEEGAVQVFRPLLNNDLIVGAVGVLQFDVVVLRLKTEYNVEAIYENVNVATARWVECADGKKFEEFKRKNEQNLALDGGDNLTYIAPTMVNLNLAQERYPDVVFYKTREH</sequence>
<reference key="1">
    <citation type="journal article" date="2007" name="Genome Biol.">
        <title>Characterization and modeling of the Haemophilus influenzae core and supragenomes based on the complete genomic sequences of Rd and 12 clinical nontypeable strains.</title>
        <authorList>
            <person name="Hogg J.S."/>
            <person name="Hu F.Z."/>
            <person name="Janto B."/>
            <person name="Boissy R."/>
            <person name="Hayes J."/>
            <person name="Keefe R."/>
            <person name="Post J.C."/>
            <person name="Ehrlich G.D."/>
        </authorList>
    </citation>
    <scope>NUCLEOTIDE SEQUENCE [LARGE SCALE GENOMIC DNA]</scope>
    <source>
        <strain>PittEE</strain>
    </source>
</reference>
<proteinExistence type="inferred from homology"/>
<gene>
    <name evidence="1" type="primary">prfC</name>
    <name type="ordered locus">CGSHiEE_03370</name>
</gene>
<evidence type="ECO:0000255" key="1">
    <source>
        <dbReference type="HAMAP-Rule" id="MF_00072"/>
    </source>
</evidence>
<feature type="chain" id="PRO_1000023650" description="Peptide chain release factor 3">
    <location>
        <begin position="1"/>
        <end position="527"/>
    </location>
</feature>
<feature type="domain" description="tr-type G">
    <location>
        <begin position="9"/>
        <end position="278"/>
    </location>
</feature>
<feature type="binding site" evidence="1">
    <location>
        <begin position="18"/>
        <end position="25"/>
    </location>
    <ligand>
        <name>GTP</name>
        <dbReference type="ChEBI" id="CHEBI:37565"/>
    </ligand>
</feature>
<feature type="binding site" evidence="1">
    <location>
        <begin position="86"/>
        <end position="90"/>
    </location>
    <ligand>
        <name>GTP</name>
        <dbReference type="ChEBI" id="CHEBI:37565"/>
    </ligand>
</feature>
<feature type="binding site" evidence="1">
    <location>
        <begin position="140"/>
        <end position="143"/>
    </location>
    <ligand>
        <name>GTP</name>
        <dbReference type="ChEBI" id="CHEBI:37565"/>
    </ligand>
</feature>
<accession>A5UBE8</accession>
<organism>
    <name type="scientific">Haemophilus influenzae (strain PittEE)</name>
    <dbReference type="NCBI Taxonomy" id="374930"/>
    <lineage>
        <taxon>Bacteria</taxon>
        <taxon>Pseudomonadati</taxon>
        <taxon>Pseudomonadota</taxon>
        <taxon>Gammaproteobacteria</taxon>
        <taxon>Pasteurellales</taxon>
        <taxon>Pasteurellaceae</taxon>
        <taxon>Haemophilus</taxon>
    </lineage>
</organism>
<dbReference type="EMBL" id="CP000671">
    <property type="protein sequence ID" value="ABQ98099.1"/>
    <property type="molecule type" value="Genomic_DNA"/>
</dbReference>
<dbReference type="SMR" id="A5UBE8"/>
<dbReference type="KEGG" id="hip:CGSHiEE_03370"/>
<dbReference type="HOGENOM" id="CLU_002794_2_1_6"/>
<dbReference type="GO" id="GO:0005829">
    <property type="term" value="C:cytosol"/>
    <property type="evidence" value="ECO:0007669"/>
    <property type="project" value="TreeGrafter"/>
</dbReference>
<dbReference type="GO" id="GO:0005525">
    <property type="term" value="F:GTP binding"/>
    <property type="evidence" value="ECO:0007669"/>
    <property type="project" value="UniProtKB-UniRule"/>
</dbReference>
<dbReference type="GO" id="GO:0003924">
    <property type="term" value="F:GTPase activity"/>
    <property type="evidence" value="ECO:0007669"/>
    <property type="project" value="InterPro"/>
</dbReference>
<dbReference type="GO" id="GO:0097216">
    <property type="term" value="F:guanosine tetraphosphate binding"/>
    <property type="evidence" value="ECO:0007669"/>
    <property type="project" value="UniProtKB-ARBA"/>
</dbReference>
<dbReference type="GO" id="GO:0016150">
    <property type="term" value="F:translation release factor activity, codon nonspecific"/>
    <property type="evidence" value="ECO:0007669"/>
    <property type="project" value="TreeGrafter"/>
</dbReference>
<dbReference type="GO" id="GO:0016149">
    <property type="term" value="F:translation release factor activity, codon specific"/>
    <property type="evidence" value="ECO:0007669"/>
    <property type="project" value="UniProtKB-UniRule"/>
</dbReference>
<dbReference type="GO" id="GO:0006449">
    <property type="term" value="P:regulation of translational termination"/>
    <property type="evidence" value="ECO:0007669"/>
    <property type="project" value="UniProtKB-UniRule"/>
</dbReference>
<dbReference type="CDD" id="cd04169">
    <property type="entry name" value="RF3"/>
    <property type="match status" value="1"/>
</dbReference>
<dbReference type="CDD" id="cd03689">
    <property type="entry name" value="RF3_II"/>
    <property type="match status" value="1"/>
</dbReference>
<dbReference type="CDD" id="cd16259">
    <property type="entry name" value="RF3_III"/>
    <property type="match status" value="1"/>
</dbReference>
<dbReference type="FunFam" id="2.40.30.10:FF:000040">
    <property type="entry name" value="Peptide chain release factor 3"/>
    <property type="match status" value="1"/>
</dbReference>
<dbReference type="FunFam" id="3.30.70.3280:FF:000001">
    <property type="entry name" value="Peptide chain release factor 3"/>
    <property type="match status" value="1"/>
</dbReference>
<dbReference type="FunFam" id="3.40.50.300:FF:000542">
    <property type="entry name" value="Peptide chain release factor 3"/>
    <property type="match status" value="1"/>
</dbReference>
<dbReference type="Gene3D" id="3.40.50.300">
    <property type="entry name" value="P-loop containing nucleotide triphosphate hydrolases"/>
    <property type="match status" value="2"/>
</dbReference>
<dbReference type="Gene3D" id="3.30.70.3280">
    <property type="entry name" value="Peptide chain release factor 3, domain III"/>
    <property type="match status" value="1"/>
</dbReference>
<dbReference type="HAMAP" id="MF_00072">
    <property type="entry name" value="Rel_fac_3"/>
    <property type="match status" value="1"/>
</dbReference>
<dbReference type="InterPro" id="IPR053905">
    <property type="entry name" value="EF-G-like_DII"/>
</dbReference>
<dbReference type="InterPro" id="IPR035647">
    <property type="entry name" value="EFG_III/V"/>
</dbReference>
<dbReference type="InterPro" id="IPR031157">
    <property type="entry name" value="G_TR_CS"/>
</dbReference>
<dbReference type="InterPro" id="IPR027417">
    <property type="entry name" value="P-loop_NTPase"/>
</dbReference>
<dbReference type="InterPro" id="IPR004548">
    <property type="entry name" value="PrfC"/>
</dbReference>
<dbReference type="InterPro" id="IPR032090">
    <property type="entry name" value="RF3_C"/>
</dbReference>
<dbReference type="InterPro" id="IPR038467">
    <property type="entry name" value="RF3_dom_3_sf"/>
</dbReference>
<dbReference type="InterPro" id="IPR041732">
    <property type="entry name" value="RF3_GTP-bd"/>
</dbReference>
<dbReference type="InterPro" id="IPR005225">
    <property type="entry name" value="Small_GTP-bd"/>
</dbReference>
<dbReference type="InterPro" id="IPR000795">
    <property type="entry name" value="T_Tr_GTP-bd_dom"/>
</dbReference>
<dbReference type="InterPro" id="IPR009000">
    <property type="entry name" value="Transl_B-barrel_sf"/>
</dbReference>
<dbReference type="NCBIfam" id="TIGR00503">
    <property type="entry name" value="prfC"/>
    <property type="match status" value="1"/>
</dbReference>
<dbReference type="NCBIfam" id="NF001964">
    <property type="entry name" value="PRK00741.1"/>
    <property type="match status" value="1"/>
</dbReference>
<dbReference type="NCBIfam" id="TIGR00231">
    <property type="entry name" value="small_GTP"/>
    <property type="match status" value="1"/>
</dbReference>
<dbReference type="PANTHER" id="PTHR43556">
    <property type="entry name" value="PEPTIDE CHAIN RELEASE FACTOR RF3"/>
    <property type="match status" value="1"/>
</dbReference>
<dbReference type="PANTHER" id="PTHR43556:SF2">
    <property type="entry name" value="PEPTIDE CHAIN RELEASE FACTOR RF3"/>
    <property type="match status" value="1"/>
</dbReference>
<dbReference type="Pfam" id="PF22042">
    <property type="entry name" value="EF-G_D2"/>
    <property type="match status" value="1"/>
</dbReference>
<dbReference type="Pfam" id="PF00009">
    <property type="entry name" value="GTP_EFTU"/>
    <property type="match status" value="1"/>
</dbReference>
<dbReference type="Pfam" id="PF16658">
    <property type="entry name" value="RF3_C"/>
    <property type="match status" value="1"/>
</dbReference>
<dbReference type="PRINTS" id="PR00315">
    <property type="entry name" value="ELONGATNFCT"/>
</dbReference>
<dbReference type="SUPFAM" id="SSF54980">
    <property type="entry name" value="EF-G C-terminal domain-like"/>
    <property type="match status" value="1"/>
</dbReference>
<dbReference type="SUPFAM" id="SSF52540">
    <property type="entry name" value="P-loop containing nucleoside triphosphate hydrolases"/>
    <property type="match status" value="1"/>
</dbReference>
<dbReference type="SUPFAM" id="SSF50447">
    <property type="entry name" value="Translation proteins"/>
    <property type="match status" value="1"/>
</dbReference>
<dbReference type="PROSITE" id="PS00301">
    <property type="entry name" value="G_TR_1"/>
    <property type="match status" value="1"/>
</dbReference>
<dbReference type="PROSITE" id="PS51722">
    <property type="entry name" value="G_TR_2"/>
    <property type="match status" value="1"/>
</dbReference>